<reference key="1">
    <citation type="journal article" date="2005" name="Proc. Natl. Acad. Sci. U.S.A.">
        <title>Complete genome sequence of Vibrio fischeri: a symbiotic bacterium with pathogenic congeners.</title>
        <authorList>
            <person name="Ruby E.G."/>
            <person name="Urbanowski M."/>
            <person name="Campbell J."/>
            <person name="Dunn A."/>
            <person name="Faini M."/>
            <person name="Gunsalus R."/>
            <person name="Lostroh P."/>
            <person name="Lupp C."/>
            <person name="McCann J."/>
            <person name="Millikan D."/>
            <person name="Schaefer A."/>
            <person name="Stabb E."/>
            <person name="Stevens A."/>
            <person name="Visick K."/>
            <person name="Whistler C."/>
            <person name="Greenberg E.P."/>
        </authorList>
    </citation>
    <scope>NUCLEOTIDE SEQUENCE [LARGE SCALE GENOMIC DNA]</scope>
    <source>
        <strain>ATCC 700601 / ES114</strain>
    </source>
</reference>
<reference key="2">
    <citation type="journal article" date="2008" name="BMC Genomics">
        <title>Comparative genomics-based investigation of resequencing targets in Vibrio fischeri: focus on point miscalls and artefactual expansions.</title>
        <authorList>
            <person name="Mandel M.J."/>
            <person name="Stabb E.V."/>
            <person name="Ruby E.G."/>
        </authorList>
    </citation>
    <scope>SEQUENCE REVISION</scope>
</reference>
<comment type="function">
    <text evidence="1">DEAD-box RNA helicase involved in RNA degradation. Has RNA-dependent ATPase activity and unwinds double-stranded RNA.</text>
</comment>
<comment type="catalytic activity">
    <reaction evidence="1">
        <text>ATP + H2O = ADP + phosphate + H(+)</text>
        <dbReference type="Rhea" id="RHEA:13065"/>
        <dbReference type="ChEBI" id="CHEBI:15377"/>
        <dbReference type="ChEBI" id="CHEBI:15378"/>
        <dbReference type="ChEBI" id="CHEBI:30616"/>
        <dbReference type="ChEBI" id="CHEBI:43474"/>
        <dbReference type="ChEBI" id="CHEBI:456216"/>
        <dbReference type="EC" id="3.6.4.13"/>
    </reaction>
</comment>
<comment type="subunit">
    <text evidence="1">Component of the RNA degradosome, which is a multiprotein complex involved in RNA processing and mRNA degradation.</text>
</comment>
<comment type="subcellular location">
    <subcellularLocation>
        <location evidence="1">Cytoplasm</location>
    </subcellularLocation>
</comment>
<comment type="similarity">
    <text evidence="1">Belongs to the DEAD box helicase family. RhlB subfamily.</text>
</comment>
<gene>
    <name evidence="1" type="primary">rhlB</name>
    <name type="ordered locus">VF_0056</name>
    <name type="ORF">VF0055</name>
</gene>
<protein>
    <recommendedName>
        <fullName evidence="1">ATP-dependent RNA helicase RhlB</fullName>
        <ecNumber evidence="1">3.6.4.13</ecNumber>
    </recommendedName>
</protein>
<proteinExistence type="inferred from homology"/>
<organism>
    <name type="scientific">Aliivibrio fischeri (strain ATCC 700601 / ES114)</name>
    <name type="common">Vibrio fischeri</name>
    <dbReference type="NCBI Taxonomy" id="312309"/>
    <lineage>
        <taxon>Bacteria</taxon>
        <taxon>Pseudomonadati</taxon>
        <taxon>Pseudomonadota</taxon>
        <taxon>Gammaproteobacteria</taxon>
        <taxon>Vibrionales</taxon>
        <taxon>Vibrionaceae</taxon>
        <taxon>Aliivibrio</taxon>
    </lineage>
</organism>
<accession>Q5E8U5</accession>
<name>RHLB_ALIF1</name>
<keyword id="KW-0067">ATP-binding</keyword>
<keyword id="KW-0963">Cytoplasm</keyword>
<keyword id="KW-0347">Helicase</keyword>
<keyword id="KW-0378">Hydrolase</keyword>
<keyword id="KW-0547">Nucleotide-binding</keyword>
<keyword id="KW-1185">Reference proteome</keyword>
<keyword id="KW-0694">RNA-binding</keyword>
<sequence>MKKTHITEQNFADLGLQPQVIDGLNAKGFIKCTPIQAKALPVLLAGQDIAGQAQTGTGKTLAFLTATFNHLLTTPAPEGRKITQPRAIIMAPTRELAIQIFNDAESLIASTGLKAALAYGGERYEKQQQVIEQGVDILIGTTGRIIDFYKQGHIDFKMIQAVVLDEADRMFDLGFIKDIRFIFRRMPAPTERLNMLFSATLSYRVQELAFEHMQEPEHVVVEPEQKTGHRIKEELFYPSNDHKMALLQTLIEEEWPDRAIIFANTKHKCESVWGHLAADKHRVGLLTGDVPQKKRERILEEFTQGNVDILVATDVAARGLHIPQVTHVFNFDLPNEAEDYVHRIGRTGRAGASGNSISFACEEYAINLPAIEEYIEHSIPQSDYDASALLEDLPAPLRLQRRPQQNRRNNNGQRQGGNRKHTRPRQPRNTQS</sequence>
<evidence type="ECO:0000255" key="1">
    <source>
        <dbReference type="HAMAP-Rule" id="MF_00661"/>
    </source>
</evidence>
<evidence type="ECO:0000256" key="2">
    <source>
        <dbReference type="SAM" id="MobiDB-lite"/>
    </source>
</evidence>
<dbReference type="EC" id="3.6.4.13" evidence="1"/>
<dbReference type="EMBL" id="CP000020">
    <property type="protein sequence ID" value="AAW84551.2"/>
    <property type="molecule type" value="Genomic_DNA"/>
</dbReference>
<dbReference type="RefSeq" id="WP_005416870.1">
    <property type="nucleotide sequence ID" value="NC_006840.2"/>
</dbReference>
<dbReference type="RefSeq" id="YP_203439.2">
    <property type="nucleotide sequence ID" value="NC_006840.2"/>
</dbReference>
<dbReference type="SMR" id="Q5E8U5"/>
<dbReference type="STRING" id="312309.VF_0056"/>
<dbReference type="EnsemblBacteria" id="AAW84551">
    <property type="protein sequence ID" value="AAW84551"/>
    <property type="gene ID" value="VF_0056"/>
</dbReference>
<dbReference type="GeneID" id="54162684"/>
<dbReference type="KEGG" id="vfi:VF_0056"/>
<dbReference type="PATRIC" id="fig|312309.11.peg.56"/>
<dbReference type="eggNOG" id="COG0513">
    <property type="taxonomic scope" value="Bacteria"/>
</dbReference>
<dbReference type="HOGENOM" id="CLU_003041_28_3_6"/>
<dbReference type="OrthoDB" id="9805696at2"/>
<dbReference type="Proteomes" id="UP000000537">
    <property type="component" value="Chromosome I"/>
</dbReference>
<dbReference type="GO" id="GO:0005829">
    <property type="term" value="C:cytosol"/>
    <property type="evidence" value="ECO:0007669"/>
    <property type="project" value="TreeGrafter"/>
</dbReference>
<dbReference type="GO" id="GO:0005524">
    <property type="term" value="F:ATP binding"/>
    <property type="evidence" value="ECO:0007669"/>
    <property type="project" value="UniProtKB-UniRule"/>
</dbReference>
<dbReference type="GO" id="GO:0016887">
    <property type="term" value="F:ATP hydrolysis activity"/>
    <property type="evidence" value="ECO:0007669"/>
    <property type="project" value="RHEA"/>
</dbReference>
<dbReference type="GO" id="GO:0003723">
    <property type="term" value="F:RNA binding"/>
    <property type="evidence" value="ECO:0007669"/>
    <property type="project" value="UniProtKB-UniRule"/>
</dbReference>
<dbReference type="GO" id="GO:0003724">
    <property type="term" value="F:RNA helicase activity"/>
    <property type="evidence" value="ECO:0007669"/>
    <property type="project" value="UniProtKB-UniRule"/>
</dbReference>
<dbReference type="GO" id="GO:0006401">
    <property type="term" value="P:RNA catabolic process"/>
    <property type="evidence" value="ECO:0007669"/>
    <property type="project" value="UniProtKB-UniRule"/>
</dbReference>
<dbReference type="CDD" id="cd00268">
    <property type="entry name" value="DEADc"/>
    <property type="match status" value="1"/>
</dbReference>
<dbReference type="CDD" id="cd18787">
    <property type="entry name" value="SF2_C_DEAD"/>
    <property type="match status" value="1"/>
</dbReference>
<dbReference type="FunFam" id="3.40.50.300:FF:000008">
    <property type="entry name" value="ATP-dependent RNA helicase RhlB"/>
    <property type="match status" value="1"/>
</dbReference>
<dbReference type="FunFam" id="3.40.50.300:FF:000312">
    <property type="entry name" value="ATP-dependent RNA helicase RhlB"/>
    <property type="match status" value="1"/>
</dbReference>
<dbReference type="Gene3D" id="3.40.50.300">
    <property type="entry name" value="P-loop containing nucleotide triphosphate hydrolases"/>
    <property type="match status" value="2"/>
</dbReference>
<dbReference type="HAMAP" id="MF_00661">
    <property type="entry name" value="DEAD_helicase_RhlB"/>
    <property type="match status" value="1"/>
</dbReference>
<dbReference type="InterPro" id="IPR011545">
    <property type="entry name" value="DEAD/DEAH_box_helicase_dom"/>
</dbReference>
<dbReference type="InterPro" id="IPR050079">
    <property type="entry name" value="DEAD_box_RNA_helicase"/>
</dbReference>
<dbReference type="InterPro" id="IPR014001">
    <property type="entry name" value="Helicase_ATP-bd"/>
</dbReference>
<dbReference type="InterPro" id="IPR001650">
    <property type="entry name" value="Helicase_C-like"/>
</dbReference>
<dbReference type="InterPro" id="IPR027417">
    <property type="entry name" value="P-loop_NTPase"/>
</dbReference>
<dbReference type="InterPro" id="IPR000629">
    <property type="entry name" value="RNA-helicase_DEAD-box_CS"/>
</dbReference>
<dbReference type="InterPro" id="IPR023554">
    <property type="entry name" value="RNA_helicase_ATP-dep_RhlB"/>
</dbReference>
<dbReference type="InterPro" id="IPR014014">
    <property type="entry name" value="RNA_helicase_DEAD_Q_motif"/>
</dbReference>
<dbReference type="NCBIfam" id="NF003419">
    <property type="entry name" value="PRK04837.1"/>
    <property type="match status" value="1"/>
</dbReference>
<dbReference type="PANTHER" id="PTHR47959:SF10">
    <property type="entry name" value="ATP-DEPENDENT RNA HELICASE RHLB"/>
    <property type="match status" value="1"/>
</dbReference>
<dbReference type="PANTHER" id="PTHR47959">
    <property type="entry name" value="ATP-DEPENDENT RNA HELICASE RHLE-RELATED"/>
    <property type="match status" value="1"/>
</dbReference>
<dbReference type="Pfam" id="PF00270">
    <property type="entry name" value="DEAD"/>
    <property type="match status" value="1"/>
</dbReference>
<dbReference type="Pfam" id="PF00271">
    <property type="entry name" value="Helicase_C"/>
    <property type="match status" value="1"/>
</dbReference>
<dbReference type="SMART" id="SM00487">
    <property type="entry name" value="DEXDc"/>
    <property type="match status" value="1"/>
</dbReference>
<dbReference type="SMART" id="SM00490">
    <property type="entry name" value="HELICc"/>
    <property type="match status" value="1"/>
</dbReference>
<dbReference type="SUPFAM" id="SSF52540">
    <property type="entry name" value="P-loop containing nucleoside triphosphate hydrolases"/>
    <property type="match status" value="1"/>
</dbReference>
<dbReference type="PROSITE" id="PS00039">
    <property type="entry name" value="DEAD_ATP_HELICASE"/>
    <property type="match status" value="1"/>
</dbReference>
<dbReference type="PROSITE" id="PS51192">
    <property type="entry name" value="HELICASE_ATP_BIND_1"/>
    <property type="match status" value="1"/>
</dbReference>
<dbReference type="PROSITE" id="PS51194">
    <property type="entry name" value="HELICASE_CTER"/>
    <property type="match status" value="1"/>
</dbReference>
<dbReference type="PROSITE" id="PS51195">
    <property type="entry name" value="Q_MOTIF"/>
    <property type="match status" value="1"/>
</dbReference>
<feature type="chain" id="PRO_1000131311" description="ATP-dependent RNA helicase RhlB">
    <location>
        <begin position="1"/>
        <end position="432"/>
    </location>
</feature>
<feature type="domain" description="Helicase ATP-binding" evidence="1">
    <location>
        <begin position="40"/>
        <end position="219"/>
    </location>
</feature>
<feature type="domain" description="Helicase C-terminal" evidence="1">
    <location>
        <begin position="245"/>
        <end position="390"/>
    </location>
</feature>
<feature type="region of interest" description="Disordered" evidence="2">
    <location>
        <begin position="396"/>
        <end position="432"/>
    </location>
</feature>
<feature type="short sequence motif" description="Q motif">
    <location>
        <begin position="9"/>
        <end position="37"/>
    </location>
</feature>
<feature type="short sequence motif" description="DEAD box">
    <location>
        <begin position="165"/>
        <end position="168"/>
    </location>
</feature>
<feature type="compositionally biased region" description="Basic residues" evidence="2">
    <location>
        <begin position="417"/>
        <end position="426"/>
    </location>
</feature>
<feature type="binding site" evidence="1">
    <location>
        <begin position="53"/>
        <end position="60"/>
    </location>
    <ligand>
        <name>ATP</name>
        <dbReference type="ChEBI" id="CHEBI:30616"/>
    </ligand>
</feature>